<gene>
    <name evidence="1" type="primary">rpsM</name>
    <name type="ordered locus">Amet_4452</name>
</gene>
<sequence>MARIAGVDLPREKRVEVGLTYIFGIGRQTSNKILAATGINVDTRIKDLTEEEVNELRKLIDADYQVEGDLRREVSLNIKRLKEIRCYRGIRHTKGLPVRGQKTKTNARTRKGPKRTVGRKKKK</sequence>
<proteinExistence type="inferred from homology"/>
<feature type="chain" id="PRO_1000067513" description="Small ribosomal subunit protein uS13">
    <location>
        <begin position="1"/>
        <end position="123"/>
    </location>
</feature>
<feature type="region of interest" description="Disordered" evidence="2">
    <location>
        <begin position="95"/>
        <end position="123"/>
    </location>
</feature>
<feature type="compositionally biased region" description="Basic residues" evidence="2">
    <location>
        <begin position="101"/>
        <end position="123"/>
    </location>
</feature>
<name>RS13_ALKMQ</name>
<evidence type="ECO:0000255" key="1">
    <source>
        <dbReference type="HAMAP-Rule" id="MF_01315"/>
    </source>
</evidence>
<evidence type="ECO:0000256" key="2">
    <source>
        <dbReference type="SAM" id="MobiDB-lite"/>
    </source>
</evidence>
<evidence type="ECO:0000305" key="3"/>
<comment type="function">
    <text evidence="1">Located at the top of the head of the 30S subunit, it contacts several helices of the 16S rRNA. In the 70S ribosome it contacts the 23S rRNA (bridge B1a) and protein L5 of the 50S subunit (bridge B1b), connecting the 2 subunits; these bridges are implicated in subunit movement. Contacts the tRNAs in the A and P-sites.</text>
</comment>
<comment type="subunit">
    <text evidence="1">Part of the 30S ribosomal subunit. Forms a loose heterodimer with protein S19. Forms two bridges to the 50S subunit in the 70S ribosome.</text>
</comment>
<comment type="similarity">
    <text evidence="1">Belongs to the universal ribosomal protein uS13 family.</text>
</comment>
<dbReference type="EMBL" id="CP000724">
    <property type="protein sequence ID" value="ABR50524.1"/>
    <property type="molecule type" value="Genomic_DNA"/>
</dbReference>
<dbReference type="RefSeq" id="WP_012065416.1">
    <property type="nucleotide sequence ID" value="NC_009633.1"/>
</dbReference>
<dbReference type="SMR" id="A6TWF6"/>
<dbReference type="STRING" id="293826.Amet_4452"/>
<dbReference type="KEGG" id="amt:Amet_4452"/>
<dbReference type="eggNOG" id="COG0099">
    <property type="taxonomic scope" value="Bacteria"/>
</dbReference>
<dbReference type="HOGENOM" id="CLU_103849_1_2_9"/>
<dbReference type="OrthoDB" id="9803610at2"/>
<dbReference type="Proteomes" id="UP000001572">
    <property type="component" value="Chromosome"/>
</dbReference>
<dbReference type="GO" id="GO:0005829">
    <property type="term" value="C:cytosol"/>
    <property type="evidence" value="ECO:0007669"/>
    <property type="project" value="TreeGrafter"/>
</dbReference>
<dbReference type="GO" id="GO:0015935">
    <property type="term" value="C:small ribosomal subunit"/>
    <property type="evidence" value="ECO:0007669"/>
    <property type="project" value="TreeGrafter"/>
</dbReference>
<dbReference type="GO" id="GO:0019843">
    <property type="term" value="F:rRNA binding"/>
    <property type="evidence" value="ECO:0007669"/>
    <property type="project" value="UniProtKB-UniRule"/>
</dbReference>
<dbReference type="GO" id="GO:0003735">
    <property type="term" value="F:structural constituent of ribosome"/>
    <property type="evidence" value="ECO:0007669"/>
    <property type="project" value="InterPro"/>
</dbReference>
<dbReference type="GO" id="GO:0000049">
    <property type="term" value="F:tRNA binding"/>
    <property type="evidence" value="ECO:0007669"/>
    <property type="project" value="UniProtKB-UniRule"/>
</dbReference>
<dbReference type="GO" id="GO:0006412">
    <property type="term" value="P:translation"/>
    <property type="evidence" value="ECO:0007669"/>
    <property type="project" value="UniProtKB-UniRule"/>
</dbReference>
<dbReference type="FunFam" id="1.10.8.50:FF:000001">
    <property type="entry name" value="30S ribosomal protein S13"/>
    <property type="match status" value="1"/>
</dbReference>
<dbReference type="FunFam" id="4.10.910.10:FF:000001">
    <property type="entry name" value="30S ribosomal protein S13"/>
    <property type="match status" value="1"/>
</dbReference>
<dbReference type="Gene3D" id="1.10.8.50">
    <property type="match status" value="1"/>
</dbReference>
<dbReference type="Gene3D" id="4.10.910.10">
    <property type="entry name" value="30s ribosomal protein s13, domain 2"/>
    <property type="match status" value="1"/>
</dbReference>
<dbReference type="HAMAP" id="MF_01315">
    <property type="entry name" value="Ribosomal_uS13"/>
    <property type="match status" value="1"/>
</dbReference>
<dbReference type="InterPro" id="IPR027437">
    <property type="entry name" value="Rbsml_uS13_C"/>
</dbReference>
<dbReference type="InterPro" id="IPR001892">
    <property type="entry name" value="Ribosomal_uS13"/>
</dbReference>
<dbReference type="InterPro" id="IPR010979">
    <property type="entry name" value="Ribosomal_uS13-like_H2TH"/>
</dbReference>
<dbReference type="InterPro" id="IPR019980">
    <property type="entry name" value="Ribosomal_uS13_bac-type"/>
</dbReference>
<dbReference type="InterPro" id="IPR018269">
    <property type="entry name" value="Ribosomal_uS13_CS"/>
</dbReference>
<dbReference type="NCBIfam" id="TIGR03631">
    <property type="entry name" value="uS13_bact"/>
    <property type="match status" value="1"/>
</dbReference>
<dbReference type="PANTHER" id="PTHR10871">
    <property type="entry name" value="30S RIBOSOMAL PROTEIN S13/40S RIBOSOMAL PROTEIN S18"/>
    <property type="match status" value="1"/>
</dbReference>
<dbReference type="PANTHER" id="PTHR10871:SF1">
    <property type="entry name" value="SMALL RIBOSOMAL SUBUNIT PROTEIN US13M"/>
    <property type="match status" value="1"/>
</dbReference>
<dbReference type="Pfam" id="PF00416">
    <property type="entry name" value="Ribosomal_S13"/>
    <property type="match status" value="1"/>
</dbReference>
<dbReference type="PIRSF" id="PIRSF002134">
    <property type="entry name" value="Ribosomal_S13"/>
    <property type="match status" value="1"/>
</dbReference>
<dbReference type="SUPFAM" id="SSF46946">
    <property type="entry name" value="S13-like H2TH domain"/>
    <property type="match status" value="1"/>
</dbReference>
<dbReference type="PROSITE" id="PS00646">
    <property type="entry name" value="RIBOSOMAL_S13_1"/>
    <property type="match status" value="1"/>
</dbReference>
<dbReference type="PROSITE" id="PS50159">
    <property type="entry name" value="RIBOSOMAL_S13_2"/>
    <property type="match status" value="1"/>
</dbReference>
<accession>A6TWF6</accession>
<reference key="1">
    <citation type="journal article" date="2016" name="Genome Announc.">
        <title>Complete genome sequence of Alkaliphilus metalliredigens strain QYMF, an alkaliphilic and metal-reducing bacterium isolated from borax-contaminated leachate ponds.</title>
        <authorList>
            <person name="Hwang C."/>
            <person name="Copeland A."/>
            <person name="Lucas S."/>
            <person name="Lapidus A."/>
            <person name="Barry K."/>
            <person name="Detter J.C."/>
            <person name="Glavina Del Rio T."/>
            <person name="Hammon N."/>
            <person name="Israni S."/>
            <person name="Dalin E."/>
            <person name="Tice H."/>
            <person name="Pitluck S."/>
            <person name="Chertkov O."/>
            <person name="Brettin T."/>
            <person name="Bruce D."/>
            <person name="Han C."/>
            <person name="Schmutz J."/>
            <person name="Larimer F."/>
            <person name="Land M.L."/>
            <person name="Hauser L."/>
            <person name="Kyrpides N."/>
            <person name="Mikhailova N."/>
            <person name="Ye Q."/>
            <person name="Zhou J."/>
            <person name="Richardson P."/>
            <person name="Fields M.W."/>
        </authorList>
    </citation>
    <scope>NUCLEOTIDE SEQUENCE [LARGE SCALE GENOMIC DNA]</scope>
    <source>
        <strain>QYMF</strain>
    </source>
</reference>
<protein>
    <recommendedName>
        <fullName evidence="1">Small ribosomal subunit protein uS13</fullName>
    </recommendedName>
    <alternativeName>
        <fullName evidence="3">30S ribosomal protein S13</fullName>
    </alternativeName>
</protein>
<organism>
    <name type="scientific">Alkaliphilus metalliredigens (strain QYMF)</name>
    <dbReference type="NCBI Taxonomy" id="293826"/>
    <lineage>
        <taxon>Bacteria</taxon>
        <taxon>Bacillati</taxon>
        <taxon>Bacillota</taxon>
        <taxon>Clostridia</taxon>
        <taxon>Peptostreptococcales</taxon>
        <taxon>Natronincolaceae</taxon>
        <taxon>Alkaliphilus</taxon>
    </lineage>
</organism>
<keyword id="KW-1185">Reference proteome</keyword>
<keyword id="KW-0687">Ribonucleoprotein</keyword>
<keyword id="KW-0689">Ribosomal protein</keyword>
<keyword id="KW-0694">RNA-binding</keyword>
<keyword id="KW-0699">rRNA-binding</keyword>
<keyword id="KW-0820">tRNA-binding</keyword>